<dbReference type="EMBL" id="CP000812">
    <property type="protein sequence ID" value="ABV33150.1"/>
    <property type="molecule type" value="Genomic_DNA"/>
</dbReference>
<dbReference type="SMR" id="A8F4R6"/>
<dbReference type="STRING" id="416591.Tlet_0584"/>
<dbReference type="KEGG" id="tle:Tlet_0584"/>
<dbReference type="eggNOG" id="COG0091">
    <property type="taxonomic scope" value="Bacteria"/>
</dbReference>
<dbReference type="HOGENOM" id="CLU_083987_3_1_0"/>
<dbReference type="OrthoDB" id="9805969at2"/>
<dbReference type="Proteomes" id="UP000002016">
    <property type="component" value="Chromosome"/>
</dbReference>
<dbReference type="GO" id="GO:0022625">
    <property type="term" value="C:cytosolic large ribosomal subunit"/>
    <property type="evidence" value="ECO:0007669"/>
    <property type="project" value="TreeGrafter"/>
</dbReference>
<dbReference type="GO" id="GO:0019843">
    <property type="term" value="F:rRNA binding"/>
    <property type="evidence" value="ECO:0007669"/>
    <property type="project" value="UniProtKB-UniRule"/>
</dbReference>
<dbReference type="GO" id="GO:0003735">
    <property type="term" value="F:structural constituent of ribosome"/>
    <property type="evidence" value="ECO:0007669"/>
    <property type="project" value="InterPro"/>
</dbReference>
<dbReference type="GO" id="GO:0006412">
    <property type="term" value="P:translation"/>
    <property type="evidence" value="ECO:0007669"/>
    <property type="project" value="UniProtKB-UniRule"/>
</dbReference>
<dbReference type="CDD" id="cd00336">
    <property type="entry name" value="Ribosomal_L22"/>
    <property type="match status" value="1"/>
</dbReference>
<dbReference type="Gene3D" id="3.90.470.10">
    <property type="entry name" value="Ribosomal protein L22/L17"/>
    <property type="match status" value="1"/>
</dbReference>
<dbReference type="HAMAP" id="MF_01331_B">
    <property type="entry name" value="Ribosomal_uL22_B"/>
    <property type="match status" value="1"/>
</dbReference>
<dbReference type="InterPro" id="IPR001063">
    <property type="entry name" value="Ribosomal_uL22"/>
</dbReference>
<dbReference type="InterPro" id="IPR005727">
    <property type="entry name" value="Ribosomal_uL22_bac/chlpt-type"/>
</dbReference>
<dbReference type="InterPro" id="IPR047867">
    <property type="entry name" value="Ribosomal_uL22_bac/org-type"/>
</dbReference>
<dbReference type="InterPro" id="IPR018260">
    <property type="entry name" value="Ribosomal_uL22_CS"/>
</dbReference>
<dbReference type="InterPro" id="IPR036394">
    <property type="entry name" value="Ribosomal_uL22_sf"/>
</dbReference>
<dbReference type="NCBIfam" id="TIGR01044">
    <property type="entry name" value="rplV_bact"/>
    <property type="match status" value="1"/>
</dbReference>
<dbReference type="PANTHER" id="PTHR13501">
    <property type="entry name" value="CHLOROPLAST 50S RIBOSOMAL PROTEIN L22-RELATED"/>
    <property type="match status" value="1"/>
</dbReference>
<dbReference type="PANTHER" id="PTHR13501:SF8">
    <property type="entry name" value="LARGE RIBOSOMAL SUBUNIT PROTEIN UL22M"/>
    <property type="match status" value="1"/>
</dbReference>
<dbReference type="Pfam" id="PF00237">
    <property type="entry name" value="Ribosomal_L22"/>
    <property type="match status" value="1"/>
</dbReference>
<dbReference type="SUPFAM" id="SSF54843">
    <property type="entry name" value="Ribosomal protein L22"/>
    <property type="match status" value="1"/>
</dbReference>
<dbReference type="PROSITE" id="PS00464">
    <property type="entry name" value="RIBOSOMAL_L22"/>
    <property type="match status" value="1"/>
</dbReference>
<proteinExistence type="inferred from homology"/>
<organism>
    <name type="scientific">Pseudothermotoga lettingae (strain ATCC BAA-301 / DSM 14385 / NBRC 107922 / TMO)</name>
    <name type="common">Thermotoga lettingae</name>
    <dbReference type="NCBI Taxonomy" id="416591"/>
    <lineage>
        <taxon>Bacteria</taxon>
        <taxon>Thermotogati</taxon>
        <taxon>Thermotogota</taxon>
        <taxon>Thermotogae</taxon>
        <taxon>Thermotogales</taxon>
        <taxon>Thermotogaceae</taxon>
        <taxon>Pseudothermotoga</taxon>
    </lineage>
</organism>
<name>RL22_PSELT</name>
<feature type="chain" id="PRO_0000354528" description="Large ribosomal subunit protein uL22">
    <location>
        <begin position="1"/>
        <end position="139"/>
    </location>
</feature>
<feature type="region of interest" description="Disordered" evidence="2">
    <location>
        <begin position="1"/>
        <end position="22"/>
    </location>
</feature>
<feature type="compositionally biased region" description="Basic residues" evidence="2">
    <location>
        <begin position="9"/>
        <end position="18"/>
    </location>
</feature>
<gene>
    <name evidence="1" type="primary">rplV</name>
    <name type="ordered locus">Tlet_0584</name>
</gene>
<accession>A8F4R6</accession>
<sequence length="139" mass="15832">MVSENEKTRRPKRSIQHRQNKDENNIEIKAVAKFLRASPRKVRSVANTIRGKSVSEAFQVLEMSPKKAARLIEKVLRSAVANAENNANLSSDSLYISRCFVDDGPRYKRIWPRGRGRADIIQRRMCHVTVAVKSIEAKS</sequence>
<evidence type="ECO:0000255" key="1">
    <source>
        <dbReference type="HAMAP-Rule" id="MF_01331"/>
    </source>
</evidence>
<evidence type="ECO:0000256" key="2">
    <source>
        <dbReference type="SAM" id="MobiDB-lite"/>
    </source>
</evidence>
<evidence type="ECO:0000305" key="3"/>
<reference key="1">
    <citation type="submission" date="2007-08" db="EMBL/GenBank/DDBJ databases">
        <title>Complete sequence of Thermotoga lettingae TMO.</title>
        <authorList>
            <consortium name="US DOE Joint Genome Institute"/>
            <person name="Copeland A."/>
            <person name="Lucas S."/>
            <person name="Lapidus A."/>
            <person name="Barry K."/>
            <person name="Glavina del Rio T."/>
            <person name="Dalin E."/>
            <person name="Tice H."/>
            <person name="Pitluck S."/>
            <person name="Foster B."/>
            <person name="Bruce D."/>
            <person name="Schmutz J."/>
            <person name="Larimer F."/>
            <person name="Land M."/>
            <person name="Hauser L."/>
            <person name="Kyrpides N."/>
            <person name="Mikhailova N."/>
            <person name="Nelson K."/>
            <person name="Gogarten J.P."/>
            <person name="Noll K."/>
            <person name="Richardson P."/>
        </authorList>
    </citation>
    <scope>NUCLEOTIDE SEQUENCE [LARGE SCALE GENOMIC DNA]</scope>
    <source>
        <strain>ATCC BAA-301 / DSM 14385 / NBRC 107922 / TMO</strain>
    </source>
</reference>
<keyword id="KW-1185">Reference proteome</keyword>
<keyword id="KW-0687">Ribonucleoprotein</keyword>
<keyword id="KW-0689">Ribosomal protein</keyword>
<keyword id="KW-0694">RNA-binding</keyword>
<keyword id="KW-0699">rRNA-binding</keyword>
<comment type="function">
    <text evidence="1">This protein binds specifically to 23S rRNA; its binding is stimulated by other ribosomal proteins, e.g. L4, L17, and L20. It is important during the early stages of 50S assembly. It makes multiple contacts with different domains of the 23S rRNA in the assembled 50S subunit and ribosome (By similarity).</text>
</comment>
<comment type="function">
    <text evidence="1">The globular domain of the protein is located near the polypeptide exit tunnel on the outside of the subunit, while an extended beta-hairpin is found that lines the wall of the exit tunnel in the center of the 70S ribosome.</text>
</comment>
<comment type="subunit">
    <text evidence="1">Part of the 50S ribosomal subunit.</text>
</comment>
<comment type="similarity">
    <text evidence="1">Belongs to the universal ribosomal protein uL22 family.</text>
</comment>
<protein>
    <recommendedName>
        <fullName evidence="1">Large ribosomal subunit protein uL22</fullName>
    </recommendedName>
    <alternativeName>
        <fullName evidence="3">50S ribosomal protein L22</fullName>
    </alternativeName>
</protein>